<keyword id="KW-0963">Cytoplasm</keyword>
<keyword id="KW-0275">Fatty acid biosynthesis</keyword>
<keyword id="KW-0276">Fatty acid metabolism</keyword>
<keyword id="KW-0444">Lipid biosynthesis</keyword>
<keyword id="KW-0443">Lipid metabolism</keyword>
<keyword id="KW-0460">Magnesium</keyword>
<keyword id="KW-0479">Metal-binding</keyword>
<keyword id="KW-1185">Reference proteome</keyword>
<keyword id="KW-0808">Transferase</keyword>
<proteinExistence type="inferred from homology"/>
<evidence type="ECO:0000255" key="1">
    <source>
        <dbReference type="HAMAP-Rule" id="MF_00101"/>
    </source>
</evidence>
<organism>
    <name type="scientific">Rhodopseudomonas palustris (strain HaA2)</name>
    <dbReference type="NCBI Taxonomy" id="316058"/>
    <lineage>
        <taxon>Bacteria</taxon>
        <taxon>Pseudomonadati</taxon>
        <taxon>Pseudomonadota</taxon>
        <taxon>Alphaproteobacteria</taxon>
        <taxon>Hyphomicrobiales</taxon>
        <taxon>Nitrobacteraceae</taxon>
        <taxon>Rhodopseudomonas</taxon>
    </lineage>
</organism>
<sequence>MIIGIGSDLIDITRIAKVIDRHGERFLDRIFTETEQARAGRRDKQPNLVAATYAKRFAAKEACSKALGTGIRQGVWWRDMGVVNQRGGRPTMLLTGGARARLDALTPPGMTAQIDLSITDEWPLAQAFVVISAIPAATSGT</sequence>
<feature type="chain" id="PRO_1000008477" description="Holo-[acyl-carrier-protein] synthase">
    <location>
        <begin position="1"/>
        <end position="141"/>
    </location>
</feature>
<feature type="binding site" evidence="1">
    <location>
        <position position="8"/>
    </location>
    <ligand>
        <name>Mg(2+)</name>
        <dbReference type="ChEBI" id="CHEBI:18420"/>
    </ligand>
</feature>
<feature type="binding site" evidence="1">
    <location>
        <position position="61"/>
    </location>
    <ligand>
        <name>Mg(2+)</name>
        <dbReference type="ChEBI" id="CHEBI:18420"/>
    </ligand>
</feature>
<reference key="1">
    <citation type="submission" date="2006-01" db="EMBL/GenBank/DDBJ databases">
        <title>Complete sequence of Rhodopseudomonas palustris HaA2.</title>
        <authorList>
            <consortium name="US DOE Joint Genome Institute"/>
            <person name="Copeland A."/>
            <person name="Lucas S."/>
            <person name="Lapidus A."/>
            <person name="Barry K."/>
            <person name="Detter J.C."/>
            <person name="Glavina T."/>
            <person name="Hammon N."/>
            <person name="Israni S."/>
            <person name="Pitluck S."/>
            <person name="Chain P."/>
            <person name="Malfatti S."/>
            <person name="Shin M."/>
            <person name="Vergez L."/>
            <person name="Schmutz J."/>
            <person name="Larimer F."/>
            <person name="Land M."/>
            <person name="Hauser L."/>
            <person name="Pelletier D.A."/>
            <person name="Kyrpides N."/>
            <person name="Anderson I."/>
            <person name="Oda Y."/>
            <person name="Harwood C.S."/>
            <person name="Richardson P."/>
        </authorList>
    </citation>
    <scope>NUCLEOTIDE SEQUENCE [LARGE SCALE GENOMIC DNA]</scope>
    <source>
        <strain>HaA2</strain>
    </source>
</reference>
<name>ACPS_RHOP2</name>
<gene>
    <name evidence="1" type="primary">acpS</name>
    <name type="ordered locus">RPB_2610</name>
</gene>
<protein>
    <recommendedName>
        <fullName evidence="1">Holo-[acyl-carrier-protein] synthase</fullName>
        <shortName evidence="1">Holo-ACP synthase</shortName>
        <ecNumber evidence="1">2.7.8.7</ecNumber>
    </recommendedName>
    <alternativeName>
        <fullName evidence="1">4'-phosphopantetheinyl transferase AcpS</fullName>
    </alternativeName>
</protein>
<comment type="function">
    <text evidence="1">Transfers the 4'-phosphopantetheine moiety from coenzyme A to a Ser of acyl-carrier-protein.</text>
</comment>
<comment type="catalytic activity">
    <reaction evidence="1">
        <text>apo-[ACP] + CoA = holo-[ACP] + adenosine 3',5'-bisphosphate + H(+)</text>
        <dbReference type="Rhea" id="RHEA:12068"/>
        <dbReference type="Rhea" id="RHEA-COMP:9685"/>
        <dbReference type="Rhea" id="RHEA-COMP:9690"/>
        <dbReference type="ChEBI" id="CHEBI:15378"/>
        <dbReference type="ChEBI" id="CHEBI:29999"/>
        <dbReference type="ChEBI" id="CHEBI:57287"/>
        <dbReference type="ChEBI" id="CHEBI:58343"/>
        <dbReference type="ChEBI" id="CHEBI:64479"/>
        <dbReference type="EC" id="2.7.8.7"/>
    </reaction>
</comment>
<comment type="cofactor">
    <cofactor evidence="1">
        <name>Mg(2+)</name>
        <dbReference type="ChEBI" id="CHEBI:18420"/>
    </cofactor>
</comment>
<comment type="subcellular location">
    <subcellularLocation>
        <location evidence="1">Cytoplasm</location>
    </subcellularLocation>
</comment>
<comment type="similarity">
    <text evidence="1">Belongs to the P-Pant transferase superfamily. AcpS family.</text>
</comment>
<accession>Q2IWU7</accession>
<dbReference type="EC" id="2.7.8.7" evidence="1"/>
<dbReference type="EMBL" id="CP000250">
    <property type="protein sequence ID" value="ABD07313.1"/>
    <property type="molecule type" value="Genomic_DNA"/>
</dbReference>
<dbReference type="RefSeq" id="WP_011441498.1">
    <property type="nucleotide sequence ID" value="NC_007778.1"/>
</dbReference>
<dbReference type="SMR" id="Q2IWU7"/>
<dbReference type="STRING" id="316058.RPB_2610"/>
<dbReference type="KEGG" id="rpb:RPB_2610"/>
<dbReference type="eggNOG" id="COG0736">
    <property type="taxonomic scope" value="Bacteria"/>
</dbReference>
<dbReference type="HOGENOM" id="CLU_089696_0_2_5"/>
<dbReference type="OrthoDB" id="517356at2"/>
<dbReference type="Proteomes" id="UP000008809">
    <property type="component" value="Chromosome"/>
</dbReference>
<dbReference type="GO" id="GO:0005737">
    <property type="term" value="C:cytoplasm"/>
    <property type="evidence" value="ECO:0007669"/>
    <property type="project" value="UniProtKB-SubCell"/>
</dbReference>
<dbReference type="GO" id="GO:0008897">
    <property type="term" value="F:holo-[acyl-carrier-protein] synthase activity"/>
    <property type="evidence" value="ECO:0007669"/>
    <property type="project" value="UniProtKB-UniRule"/>
</dbReference>
<dbReference type="GO" id="GO:0000287">
    <property type="term" value="F:magnesium ion binding"/>
    <property type="evidence" value="ECO:0007669"/>
    <property type="project" value="UniProtKB-UniRule"/>
</dbReference>
<dbReference type="GO" id="GO:0006633">
    <property type="term" value="P:fatty acid biosynthetic process"/>
    <property type="evidence" value="ECO:0007669"/>
    <property type="project" value="UniProtKB-UniRule"/>
</dbReference>
<dbReference type="Gene3D" id="3.90.470.20">
    <property type="entry name" value="4'-phosphopantetheinyl transferase domain"/>
    <property type="match status" value="1"/>
</dbReference>
<dbReference type="HAMAP" id="MF_00101">
    <property type="entry name" value="AcpS"/>
    <property type="match status" value="1"/>
</dbReference>
<dbReference type="InterPro" id="IPR008278">
    <property type="entry name" value="4-PPantetheinyl_Trfase_dom"/>
</dbReference>
<dbReference type="InterPro" id="IPR037143">
    <property type="entry name" value="4-PPantetheinyl_Trfase_dom_sf"/>
</dbReference>
<dbReference type="InterPro" id="IPR002582">
    <property type="entry name" value="ACPS"/>
</dbReference>
<dbReference type="InterPro" id="IPR004568">
    <property type="entry name" value="Ppantetheine-prot_Trfase_dom"/>
</dbReference>
<dbReference type="NCBIfam" id="TIGR00516">
    <property type="entry name" value="acpS"/>
    <property type="match status" value="1"/>
</dbReference>
<dbReference type="NCBIfam" id="TIGR00556">
    <property type="entry name" value="pantethn_trn"/>
    <property type="match status" value="1"/>
</dbReference>
<dbReference type="Pfam" id="PF01648">
    <property type="entry name" value="ACPS"/>
    <property type="match status" value="1"/>
</dbReference>
<dbReference type="SUPFAM" id="SSF56214">
    <property type="entry name" value="4'-phosphopantetheinyl transferase"/>
    <property type="match status" value="1"/>
</dbReference>